<organism>
    <name type="scientific">Draba nemorosa</name>
    <name type="common">Woodland whitlowgrass</name>
    <dbReference type="NCBI Taxonomy" id="171822"/>
    <lineage>
        <taxon>Eukaryota</taxon>
        <taxon>Viridiplantae</taxon>
        <taxon>Streptophyta</taxon>
        <taxon>Embryophyta</taxon>
        <taxon>Tracheophyta</taxon>
        <taxon>Spermatophyta</taxon>
        <taxon>Magnoliopsida</taxon>
        <taxon>eudicotyledons</taxon>
        <taxon>Gunneridae</taxon>
        <taxon>Pentapetalae</taxon>
        <taxon>rosids</taxon>
        <taxon>malvids</taxon>
        <taxon>Brassicales</taxon>
        <taxon>Brassicaceae</taxon>
        <taxon>Arabideae</taxon>
        <taxon>Draba</taxon>
    </lineage>
</organism>
<dbReference type="EMBL" id="AP009373">
    <property type="protein sequence ID" value="BAF50361.1"/>
    <property type="molecule type" value="Genomic_DNA"/>
</dbReference>
<dbReference type="RefSeq" id="YP_001123537.1">
    <property type="nucleotide sequence ID" value="NC_009272.1"/>
</dbReference>
<dbReference type="SMR" id="A4QL06"/>
<dbReference type="GeneID" id="4964760"/>
<dbReference type="GO" id="GO:0009535">
    <property type="term" value="C:chloroplast thylakoid membrane"/>
    <property type="evidence" value="ECO:0007669"/>
    <property type="project" value="UniProtKB-SubCell"/>
</dbReference>
<dbReference type="GO" id="GO:0045259">
    <property type="term" value="C:proton-transporting ATP synthase complex"/>
    <property type="evidence" value="ECO:0007669"/>
    <property type="project" value="UniProtKB-KW"/>
</dbReference>
<dbReference type="GO" id="GO:0033177">
    <property type="term" value="C:proton-transporting two-sector ATPase complex, proton-transporting domain"/>
    <property type="evidence" value="ECO:0007669"/>
    <property type="project" value="InterPro"/>
</dbReference>
<dbReference type="GO" id="GO:0008289">
    <property type="term" value="F:lipid binding"/>
    <property type="evidence" value="ECO:0007669"/>
    <property type="project" value="UniProtKB-KW"/>
</dbReference>
<dbReference type="GO" id="GO:0046933">
    <property type="term" value="F:proton-transporting ATP synthase activity, rotational mechanism"/>
    <property type="evidence" value="ECO:0007669"/>
    <property type="project" value="UniProtKB-UniRule"/>
</dbReference>
<dbReference type="CDD" id="cd18183">
    <property type="entry name" value="ATP-synt_Fo_c_ATPH"/>
    <property type="match status" value="1"/>
</dbReference>
<dbReference type="FunFam" id="1.20.20.10:FF:000001">
    <property type="entry name" value="ATP synthase subunit c, chloroplastic"/>
    <property type="match status" value="1"/>
</dbReference>
<dbReference type="Gene3D" id="1.20.20.10">
    <property type="entry name" value="F1F0 ATP synthase subunit C"/>
    <property type="match status" value="1"/>
</dbReference>
<dbReference type="HAMAP" id="MF_01396">
    <property type="entry name" value="ATP_synth_c_bact"/>
    <property type="match status" value="1"/>
</dbReference>
<dbReference type="InterPro" id="IPR005953">
    <property type="entry name" value="ATP_synth_csu_bac/chlpt"/>
</dbReference>
<dbReference type="InterPro" id="IPR000454">
    <property type="entry name" value="ATP_synth_F0_csu"/>
</dbReference>
<dbReference type="InterPro" id="IPR020537">
    <property type="entry name" value="ATP_synth_F0_csu_DDCD_BS"/>
</dbReference>
<dbReference type="InterPro" id="IPR038662">
    <property type="entry name" value="ATP_synth_F0_csu_sf"/>
</dbReference>
<dbReference type="InterPro" id="IPR002379">
    <property type="entry name" value="ATPase_proteolipid_c-like_dom"/>
</dbReference>
<dbReference type="InterPro" id="IPR035921">
    <property type="entry name" value="F/V-ATP_Csub_sf"/>
</dbReference>
<dbReference type="NCBIfam" id="TIGR01260">
    <property type="entry name" value="ATP_synt_c"/>
    <property type="match status" value="1"/>
</dbReference>
<dbReference type="NCBIfam" id="NF005608">
    <property type="entry name" value="PRK07354.1"/>
    <property type="match status" value="1"/>
</dbReference>
<dbReference type="PANTHER" id="PTHR10031">
    <property type="entry name" value="ATP SYNTHASE LIPID-BINDING PROTEIN, MITOCHONDRIAL"/>
    <property type="match status" value="1"/>
</dbReference>
<dbReference type="PANTHER" id="PTHR10031:SF0">
    <property type="entry name" value="ATPASE PROTEIN 9"/>
    <property type="match status" value="1"/>
</dbReference>
<dbReference type="Pfam" id="PF00137">
    <property type="entry name" value="ATP-synt_C"/>
    <property type="match status" value="1"/>
</dbReference>
<dbReference type="PRINTS" id="PR00124">
    <property type="entry name" value="ATPASEC"/>
</dbReference>
<dbReference type="SUPFAM" id="SSF81333">
    <property type="entry name" value="F1F0 ATP synthase subunit C"/>
    <property type="match status" value="1"/>
</dbReference>
<dbReference type="PROSITE" id="PS00605">
    <property type="entry name" value="ATPASE_C"/>
    <property type="match status" value="1"/>
</dbReference>
<proteinExistence type="inferred from homology"/>
<protein>
    <recommendedName>
        <fullName evidence="1">ATP synthase subunit c, chloroplastic</fullName>
    </recommendedName>
    <alternativeName>
        <fullName evidence="1">ATP synthase F(0) sector subunit c</fullName>
    </alternativeName>
    <alternativeName>
        <fullName evidence="1">ATPase subunit III</fullName>
    </alternativeName>
    <alternativeName>
        <fullName evidence="1">F-type ATPase subunit c</fullName>
        <shortName evidence="1">F-ATPase subunit c</shortName>
    </alternativeName>
    <alternativeName>
        <fullName evidence="1">Lipid-binding protein</fullName>
    </alternativeName>
</protein>
<name>ATPH_DRANE</name>
<feature type="chain" id="PRO_0000362913" description="ATP synthase subunit c, chloroplastic">
    <location>
        <begin position="1"/>
        <end position="81"/>
    </location>
</feature>
<feature type="transmembrane region" description="Helical" evidence="1">
    <location>
        <begin position="7"/>
        <end position="27"/>
    </location>
</feature>
<feature type="transmembrane region" description="Helical" evidence="1">
    <location>
        <begin position="57"/>
        <end position="77"/>
    </location>
</feature>
<feature type="site" description="Reversibly protonated during proton transport" evidence="1">
    <location>
        <position position="61"/>
    </location>
</feature>
<geneLocation type="chloroplast"/>
<keyword id="KW-0066">ATP synthesis</keyword>
<keyword id="KW-0138">CF(0)</keyword>
<keyword id="KW-0150">Chloroplast</keyword>
<keyword id="KW-0375">Hydrogen ion transport</keyword>
<keyword id="KW-0406">Ion transport</keyword>
<keyword id="KW-0446">Lipid-binding</keyword>
<keyword id="KW-0472">Membrane</keyword>
<keyword id="KW-0934">Plastid</keyword>
<keyword id="KW-0793">Thylakoid</keyword>
<keyword id="KW-0812">Transmembrane</keyword>
<keyword id="KW-1133">Transmembrane helix</keyword>
<keyword id="KW-0813">Transport</keyword>
<comment type="function">
    <text evidence="1">F(1)F(0) ATP synthase produces ATP from ADP in the presence of a proton or sodium gradient. F-type ATPases consist of two structural domains, F(1) containing the extramembraneous catalytic core and F(0) containing the membrane proton channel, linked together by a central stalk and a peripheral stalk. During catalysis, ATP synthesis in the catalytic domain of F(1) is coupled via a rotary mechanism of the central stalk subunits to proton translocation.</text>
</comment>
<comment type="function">
    <text evidence="1">Key component of the F(0) channel; it plays a direct role in translocation across the membrane. A homomeric c-ring of between 10-14 subunits forms the central stalk rotor element with the F(1) delta and epsilon subunits.</text>
</comment>
<comment type="subunit">
    <text evidence="1">F-type ATPases have 2 components, F(1) - the catalytic core - and F(0) - the membrane proton channel. F(1) has five subunits: alpha(3), beta(3), gamma(1), delta(1), epsilon(1). F(0) has four main subunits: a(1), b(1), b'(1) and c(10-14). The alpha and beta chains form an alternating ring which encloses part of the gamma chain. F(1) is attached to F(0) by a central stalk formed by the gamma and epsilon chains, while a peripheral stalk is formed by the delta, b and b' chains.</text>
</comment>
<comment type="subcellular location">
    <subcellularLocation>
        <location evidence="1">Plastid</location>
        <location evidence="1">Chloroplast thylakoid membrane</location>
        <topology evidence="1">Multi-pass membrane protein</topology>
    </subcellularLocation>
</comment>
<comment type="miscellaneous">
    <text>In plastids the F-type ATPase is also known as CF(1)CF(0).</text>
</comment>
<comment type="similarity">
    <text evidence="1">Belongs to the ATPase C chain family.</text>
</comment>
<evidence type="ECO:0000255" key="1">
    <source>
        <dbReference type="HAMAP-Rule" id="MF_01396"/>
    </source>
</evidence>
<sequence>MNPLVSAASVIAAGLAVGLASIGPGVGQGTAAGQAVEGIARQPEAEGKIRGTLLLSLAFMEALTIYGLVVALALLFANPFV</sequence>
<accession>A4QL06</accession>
<gene>
    <name evidence="1" type="primary">atpH</name>
</gene>
<reference key="1">
    <citation type="submission" date="2007-03" db="EMBL/GenBank/DDBJ databases">
        <title>Sequencing analysis of Draba nemoroza chloroplast DNA.</title>
        <authorList>
            <person name="Hosouchi T."/>
            <person name="Tsuruoka H."/>
            <person name="Kotani H."/>
        </authorList>
    </citation>
    <scope>NUCLEOTIDE SEQUENCE [LARGE SCALE GENOMIC DNA]</scope>
</reference>